<evidence type="ECO:0000255" key="1"/>
<evidence type="ECO:0000255" key="2">
    <source>
        <dbReference type="PROSITE-ProRule" id="PRU00198"/>
    </source>
</evidence>
<evidence type="ECO:0000256" key="3">
    <source>
        <dbReference type="SAM" id="MobiDB-lite"/>
    </source>
</evidence>
<evidence type="ECO:0000305" key="4"/>
<comment type="function">
    <text>Low-affinity H(+)/sulfate cotransporter which may be involved in the internal transport of sulfate between cellular or subcellular compartments within the plant.</text>
</comment>
<comment type="subcellular location">
    <subcellularLocation>
        <location evidence="4">Membrane</location>
        <topology evidence="4">Multi-pass membrane protein</topology>
    </subcellularLocation>
</comment>
<comment type="similarity">
    <text evidence="4">Belongs to the SLC26A/SulP transporter (TC 2.A.53) family.</text>
</comment>
<sequence>MSSLGTEQFSERSQWVLNSPNPPPLTKKFLGPLKDNKFFTSSSSKKETRAVSFLASLFPILSWIRTYSATKFKDDLLSGLTLASLSIPQSIGYANLAKLDPQYGLYTSVIPPVIYALMGSSREIAIGPVAVVSMLLSSLVPKVIDPDAHPNDYRNLVFTVTLFAGIFQTAFGVLRLGFLVDFLSHAALVGFMAGAAIVIGLQQLKGLLGLTHFTTKTDAVAVLKSVYTSLHQQITSSENWSPLNFVIGCSFLIFLLAARFIGRRNKKFFWLPAIAPLLSVILSTLIVFLSKGDKHGVNIIKHVQGGLNPSSVHKLQLNGPHVGQAAKIGLISAIIALTEAIAVGRSFANIKGYHLDGNKEMLAMGCMNIAGSLTSCYVSTGSFSRTAVNFSAGCKTAVSNIVMAVTVLLCLELFTRLLYYTPMAILASIILSALPGLIDIGEAYHIWKVDKFDFLACLGAFFGVLFVSIEIGLLIALSISFAKILLQAIRPGVEVLGRIPTTEAYCDVAQYPMAVTTPGILVIRISSGSLCFANAGFVRERILKWVEDEEQDNIEEAAKGRVQAIIIDMTDLTNVDTSGILALEELHKKLLSRGVELAMVNPRWEVIHKLKVANFVDKIGKERVFLTVAEAVDACLSSRFANSA</sequence>
<feature type="chain" id="PRO_0000080191" description="Low affinity sulfate transporter 3">
    <location>
        <begin position="1"/>
        <end position="644"/>
    </location>
</feature>
<feature type="transmembrane region" description="Helical" evidence="1">
    <location>
        <begin position="50"/>
        <end position="70"/>
    </location>
</feature>
<feature type="transmembrane region" description="Helical" evidence="1">
    <location>
        <begin position="76"/>
        <end position="96"/>
    </location>
</feature>
<feature type="transmembrane region" description="Helical" evidence="1">
    <location>
        <begin position="99"/>
        <end position="119"/>
    </location>
</feature>
<feature type="transmembrane region" description="Helical" evidence="1">
    <location>
        <begin position="124"/>
        <end position="144"/>
    </location>
</feature>
<feature type="transmembrane region" description="Helical" evidence="1">
    <location>
        <begin position="156"/>
        <end position="176"/>
    </location>
</feature>
<feature type="transmembrane region" description="Helical" evidence="1">
    <location>
        <begin position="179"/>
        <end position="199"/>
    </location>
</feature>
<feature type="transmembrane region" description="Helical" evidence="1">
    <location>
        <begin position="242"/>
        <end position="262"/>
    </location>
</feature>
<feature type="transmembrane region" description="Helical" evidence="1">
    <location>
        <begin position="268"/>
        <end position="288"/>
    </location>
</feature>
<feature type="transmembrane region" description="Helical" evidence="1">
    <location>
        <begin position="328"/>
        <end position="348"/>
    </location>
</feature>
<feature type="transmembrane region" description="Helical" evidence="1">
    <location>
        <begin position="394"/>
        <end position="414"/>
    </location>
</feature>
<feature type="transmembrane region" description="Helical" evidence="1">
    <location>
        <begin position="418"/>
        <end position="438"/>
    </location>
</feature>
<feature type="transmembrane region" description="Helical" evidence="1">
    <location>
        <begin position="455"/>
        <end position="475"/>
    </location>
</feature>
<feature type="transmembrane region" description="Helical" evidence="1">
    <location>
        <begin position="518"/>
        <end position="538"/>
    </location>
</feature>
<feature type="domain" description="STAS" evidence="2">
    <location>
        <begin position="511"/>
        <end position="635"/>
    </location>
</feature>
<feature type="region of interest" description="Disordered" evidence="3">
    <location>
        <begin position="1"/>
        <end position="20"/>
    </location>
</feature>
<feature type="compositionally biased region" description="Polar residues" evidence="3">
    <location>
        <begin position="1"/>
        <end position="19"/>
    </location>
</feature>
<dbReference type="EMBL" id="X82454">
    <property type="protein sequence ID" value="CAA57831.1"/>
    <property type="molecule type" value="mRNA"/>
</dbReference>
<dbReference type="PIR" id="S51765">
    <property type="entry name" value="S51765"/>
</dbReference>
<dbReference type="SMR" id="P53393"/>
<dbReference type="TCDB" id="2.A.53.1.4">
    <property type="family name" value="the sulfate permease (sulp) family"/>
</dbReference>
<dbReference type="GO" id="GO:0016020">
    <property type="term" value="C:membrane"/>
    <property type="evidence" value="ECO:0007669"/>
    <property type="project" value="UniProtKB-SubCell"/>
</dbReference>
<dbReference type="GO" id="GO:0008271">
    <property type="term" value="F:secondary active sulfate transmembrane transporter activity"/>
    <property type="evidence" value="ECO:0007669"/>
    <property type="project" value="InterPro"/>
</dbReference>
<dbReference type="CDD" id="cd07042">
    <property type="entry name" value="STAS_SulP_like_sulfate_transporter"/>
    <property type="match status" value="1"/>
</dbReference>
<dbReference type="FunFam" id="3.30.750.24:FF:000002">
    <property type="entry name" value="Sulfate transporter 31"/>
    <property type="match status" value="1"/>
</dbReference>
<dbReference type="Gene3D" id="3.30.750.24">
    <property type="entry name" value="STAS domain"/>
    <property type="match status" value="1"/>
</dbReference>
<dbReference type="InterPro" id="IPR018045">
    <property type="entry name" value="S04_transporter_CS"/>
</dbReference>
<dbReference type="InterPro" id="IPR011547">
    <property type="entry name" value="SLC26A/SulP_dom"/>
</dbReference>
<dbReference type="InterPro" id="IPR001902">
    <property type="entry name" value="SLC26A/SulP_fam"/>
</dbReference>
<dbReference type="InterPro" id="IPR002645">
    <property type="entry name" value="STAS_dom"/>
</dbReference>
<dbReference type="InterPro" id="IPR036513">
    <property type="entry name" value="STAS_dom_sf"/>
</dbReference>
<dbReference type="NCBIfam" id="TIGR00815">
    <property type="entry name" value="sulP"/>
    <property type="match status" value="1"/>
</dbReference>
<dbReference type="PANTHER" id="PTHR11814">
    <property type="entry name" value="SULFATE TRANSPORTER"/>
    <property type="match status" value="1"/>
</dbReference>
<dbReference type="Pfam" id="PF01740">
    <property type="entry name" value="STAS"/>
    <property type="match status" value="1"/>
</dbReference>
<dbReference type="Pfam" id="PF00916">
    <property type="entry name" value="Sulfate_transp"/>
    <property type="match status" value="1"/>
</dbReference>
<dbReference type="SUPFAM" id="SSF52091">
    <property type="entry name" value="SpoIIaa-like"/>
    <property type="match status" value="1"/>
</dbReference>
<dbReference type="PROSITE" id="PS01130">
    <property type="entry name" value="SLC26A"/>
    <property type="match status" value="1"/>
</dbReference>
<dbReference type="PROSITE" id="PS50801">
    <property type="entry name" value="STAS"/>
    <property type="match status" value="1"/>
</dbReference>
<keyword id="KW-0472">Membrane</keyword>
<keyword id="KW-0812">Transmembrane</keyword>
<keyword id="KW-1133">Transmembrane helix</keyword>
<keyword id="KW-0813">Transport</keyword>
<accession>P53393</accession>
<protein>
    <recommendedName>
        <fullName>Low affinity sulfate transporter 3</fullName>
    </recommendedName>
</protein>
<proteinExistence type="evidence at transcript level"/>
<organism>
    <name type="scientific">Stylosanthes hamata</name>
    <name type="common">Caribbean stylo</name>
    <dbReference type="NCBI Taxonomy" id="37660"/>
    <lineage>
        <taxon>Eukaryota</taxon>
        <taxon>Viridiplantae</taxon>
        <taxon>Streptophyta</taxon>
        <taxon>Embryophyta</taxon>
        <taxon>Tracheophyta</taxon>
        <taxon>Spermatophyta</taxon>
        <taxon>Magnoliopsida</taxon>
        <taxon>eudicotyledons</taxon>
        <taxon>Gunneridae</taxon>
        <taxon>Pentapetalae</taxon>
        <taxon>rosids</taxon>
        <taxon>fabids</taxon>
        <taxon>Fabales</taxon>
        <taxon>Fabaceae</taxon>
        <taxon>Papilionoideae</taxon>
        <taxon>50 kb inversion clade</taxon>
        <taxon>dalbergioids sensu lato</taxon>
        <taxon>Dalbergieae</taxon>
        <taxon>Pterocarpus clade</taxon>
        <taxon>Stylosanthes</taxon>
    </lineage>
</organism>
<gene>
    <name type="primary">ST3</name>
</gene>
<reference key="1">
    <citation type="journal article" date="1995" name="Proc. Natl. Acad. Sci. U.S.A.">
        <title>Plant members of a family of sulfate transporters reveal functional subtypes.</title>
        <authorList>
            <person name="Smith F.W."/>
            <person name="Ealing P.M."/>
            <person name="Hawkesford M.J."/>
            <person name="Clarkson D.T."/>
        </authorList>
    </citation>
    <scope>NUCLEOTIDE SEQUENCE [MRNA]</scope>
    <source>
        <strain>cv. Verano</strain>
        <tissue>Root</tissue>
    </source>
</reference>
<name>SUT3_STYHA</name>